<dbReference type="EMBL" id="CP001336">
    <property type="protein sequence ID" value="ACL22081.1"/>
    <property type="molecule type" value="Genomic_DNA"/>
</dbReference>
<dbReference type="RefSeq" id="WP_015945001.1">
    <property type="nucleotide sequence ID" value="NC_011830.1"/>
</dbReference>
<dbReference type="SMR" id="B8FT65"/>
<dbReference type="KEGG" id="dhd:Dhaf_4072"/>
<dbReference type="HOGENOM" id="CLU_107907_0_5_9"/>
<dbReference type="Proteomes" id="UP000007726">
    <property type="component" value="Chromosome"/>
</dbReference>
<dbReference type="GO" id="GO:0005737">
    <property type="term" value="C:cytoplasm"/>
    <property type="evidence" value="ECO:0007669"/>
    <property type="project" value="UniProtKB-UniRule"/>
</dbReference>
<dbReference type="GO" id="GO:0009295">
    <property type="term" value="C:nucleoid"/>
    <property type="evidence" value="ECO:0007669"/>
    <property type="project" value="UniProtKB-SubCell"/>
</dbReference>
<dbReference type="GO" id="GO:0003700">
    <property type="term" value="F:DNA-binding transcription factor activity"/>
    <property type="evidence" value="ECO:0007669"/>
    <property type="project" value="UniProtKB-UniRule"/>
</dbReference>
<dbReference type="GO" id="GO:0000976">
    <property type="term" value="F:transcription cis-regulatory region binding"/>
    <property type="evidence" value="ECO:0007669"/>
    <property type="project" value="TreeGrafter"/>
</dbReference>
<dbReference type="GO" id="GO:2000143">
    <property type="term" value="P:negative regulation of DNA-templated transcription initiation"/>
    <property type="evidence" value="ECO:0007669"/>
    <property type="project" value="TreeGrafter"/>
</dbReference>
<dbReference type="CDD" id="cd16321">
    <property type="entry name" value="MraZ_C"/>
    <property type="match status" value="1"/>
</dbReference>
<dbReference type="CDD" id="cd16320">
    <property type="entry name" value="MraZ_N"/>
    <property type="match status" value="1"/>
</dbReference>
<dbReference type="FunFam" id="3.40.1550.20:FF:000002">
    <property type="entry name" value="Transcriptional regulator MraZ"/>
    <property type="match status" value="1"/>
</dbReference>
<dbReference type="Gene3D" id="3.40.1550.20">
    <property type="entry name" value="Transcriptional regulator MraZ domain"/>
    <property type="match status" value="1"/>
</dbReference>
<dbReference type="HAMAP" id="MF_01008">
    <property type="entry name" value="MraZ"/>
    <property type="match status" value="1"/>
</dbReference>
<dbReference type="InterPro" id="IPR003444">
    <property type="entry name" value="MraZ"/>
</dbReference>
<dbReference type="InterPro" id="IPR035644">
    <property type="entry name" value="MraZ_C"/>
</dbReference>
<dbReference type="InterPro" id="IPR020603">
    <property type="entry name" value="MraZ_dom"/>
</dbReference>
<dbReference type="InterPro" id="IPR035642">
    <property type="entry name" value="MraZ_N"/>
</dbReference>
<dbReference type="InterPro" id="IPR038619">
    <property type="entry name" value="MraZ_sf"/>
</dbReference>
<dbReference type="InterPro" id="IPR007159">
    <property type="entry name" value="SpoVT-AbrB_dom"/>
</dbReference>
<dbReference type="InterPro" id="IPR037914">
    <property type="entry name" value="SpoVT-AbrB_sf"/>
</dbReference>
<dbReference type="NCBIfam" id="TIGR00242">
    <property type="entry name" value="division/cell wall cluster transcriptional repressor MraZ"/>
    <property type="match status" value="1"/>
</dbReference>
<dbReference type="PANTHER" id="PTHR34701">
    <property type="entry name" value="TRANSCRIPTIONAL REGULATOR MRAZ"/>
    <property type="match status" value="1"/>
</dbReference>
<dbReference type="PANTHER" id="PTHR34701:SF1">
    <property type="entry name" value="TRANSCRIPTIONAL REGULATOR MRAZ"/>
    <property type="match status" value="1"/>
</dbReference>
<dbReference type="Pfam" id="PF02381">
    <property type="entry name" value="MraZ"/>
    <property type="match status" value="2"/>
</dbReference>
<dbReference type="SUPFAM" id="SSF89447">
    <property type="entry name" value="AbrB/MazE/MraZ-like"/>
    <property type="match status" value="1"/>
</dbReference>
<dbReference type="PROSITE" id="PS51740">
    <property type="entry name" value="SPOVT_ABRB"/>
    <property type="match status" value="2"/>
</dbReference>
<comment type="subunit">
    <text evidence="1">Forms oligomers.</text>
</comment>
<comment type="subcellular location">
    <subcellularLocation>
        <location evidence="1">Cytoplasm</location>
        <location evidence="1">Nucleoid</location>
    </subcellularLocation>
</comment>
<comment type="similarity">
    <text evidence="1">Belongs to the MraZ family.</text>
</comment>
<accession>B8FT65</accession>
<proteinExistence type="inferred from homology"/>
<feature type="chain" id="PRO_1000148851" description="Transcriptional regulator MraZ">
    <location>
        <begin position="1"/>
        <end position="143"/>
    </location>
</feature>
<feature type="domain" description="SpoVT-AbrB 1" evidence="2">
    <location>
        <begin position="5"/>
        <end position="47"/>
    </location>
</feature>
<feature type="domain" description="SpoVT-AbrB 2" evidence="2">
    <location>
        <begin position="76"/>
        <end position="119"/>
    </location>
</feature>
<organism>
    <name type="scientific">Desulfitobacterium hafniense (strain DSM 10664 / DCB-2)</name>
    <dbReference type="NCBI Taxonomy" id="272564"/>
    <lineage>
        <taxon>Bacteria</taxon>
        <taxon>Bacillati</taxon>
        <taxon>Bacillota</taxon>
        <taxon>Clostridia</taxon>
        <taxon>Eubacteriales</taxon>
        <taxon>Desulfitobacteriaceae</taxon>
        <taxon>Desulfitobacterium</taxon>
    </lineage>
</organism>
<evidence type="ECO:0000255" key="1">
    <source>
        <dbReference type="HAMAP-Rule" id="MF_01008"/>
    </source>
</evidence>
<evidence type="ECO:0000255" key="2">
    <source>
        <dbReference type="PROSITE-ProRule" id="PRU01076"/>
    </source>
</evidence>
<name>MRAZ_DESHD</name>
<protein>
    <recommendedName>
        <fullName>Transcriptional regulator MraZ</fullName>
    </recommendedName>
</protein>
<keyword id="KW-0963">Cytoplasm</keyword>
<keyword id="KW-0238">DNA-binding</keyword>
<keyword id="KW-0677">Repeat</keyword>
<keyword id="KW-0804">Transcription</keyword>
<keyword id="KW-0805">Transcription regulation</keyword>
<sequence length="143" mass="16244">MFMGEYLHTIDGKGRLIVPARFREALGERFIATKGLDHCLFVYPLDEWKVLEEKLRALPFTQPEARAFVRFFFSGATECELDKQGRILLPANLREYAQLDKDAVLVGVSSRVEIWSQALWANYSRQAEDAYASAAESLVNLGI</sequence>
<reference key="1">
    <citation type="journal article" date="2012" name="BMC Microbiol.">
        <title>Genome sequence of Desulfitobacterium hafniense DCB-2, a Gram-positive anaerobe capable of dehalogenation and metal reduction.</title>
        <authorList>
            <person name="Kim S.H."/>
            <person name="Harzman C."/>
            <person name="Davis J.K."/>
            <person name="Hutcheson R."/>
            <person name="Broderick J.B."/>
            <person name="Marsh T.L."/>
            <person name="Tiedje J.M."/>
        </authorList>
    </citation>
    <scope>NUCLEOTIDE SEQUENCE [LARGE SCALE GENOMIC DNA]</scope>
    <source>
        <strain>DSM 10664 / DCB-2</strain>
    </source>
</reference>
<gene>
    <name evidence="1" type="primary">mraZ</name>
    <name type="ordered locus">Dhaf_4072</name>
</gene>